<keyword id="KW-0997">Cell inner membrane</keyword>
<keyword id="KW-1003">Cell membrane</keyword>
<keyword id="KW-0472">Membrane</keyword>
<keyword id="KW-0732">Signal</keyword>
<keyword id="KW-0813">Transport</keyword>
<proteinExistence type="inferred from homology"/>
<reference key="1">
    <citation type="submission" date="2006-09" db="EMBL/GenBank/DDBJ databases">
        <authorList>
            <consortium name="The Klebsiella pneumonia Genome Sequencing Project"/>
            <person name="McClelland M."/>
            <person name="Sanderson E.K."/>
            <person name="Spieth J."/>
            <person name="Clifton W.S."/>
            <person name="Latreille P."/>
            <person name="Sabo A."/>
            <person name="Pepin K."/>
            <person name="Bhonagiri V."/>
            <person name="Porwollik S."/>
            <person name="Ali J."/>
            <person name="Wilson R.K."/>
        </authorList>
    </citation>
    <scope>NUCLEOTIDE SEQUENCE [LARGE SCALE GENOMIC DNA]</scope>
    <source>
        <strain>ATCC 700721 / MGH 78578</strain>
    </source>
</reference>
<organism>
    <name type="scientific">Klebsiella pneumoniae subsp. pneumoniae (strain ATCC 700721 / MGH 78578)</name>
    <dbReference type="NCBI Taxonomy" id="272620"/>
    <lineage>
        <taxon>Bacteria</taxon>
        <taxon>Pseudomonadati</taxon>
        <taxon>Pseudomonadota</taxon>
        <taxon>Gammaproteobacteria</taxon>
        <taxon>Enterobacterales</taxon>
        <taxon>Enterobacteriaceae</taxon>
        <taxon>Klebsiella/Raoultella group</taxon>
        <taxon>Klebsiella</taxon>
        <taxon>Klebsiella pneumoniae complex</taxon>
    </lineage>
</organism>
<sequence length="412" mass="43392">MKGSNIRRWGAALAVVIIAGAAYWFWHDRGTSGSGAPAAGQGPQGPGGARHGRFGAALAPVQAATATEEAVPRYLTGLGTVTAANTVTVRSRVDGQLLSLHFQEGQQVKAGDLLAQIDPSQFKVALAQAQGQLAKDQATLANARRDLARYQQLVKTNLVSRQELDTQQSLVVESAGTVKADEAAVASAQLQLDWTRITAPIDGRVGLKQVDIGNQISSGDTTGIVVLTQTHPIDVVFTLPESSIATVVQAQKAGKALSVEAWDRTNKQKISVGELLSLDNQIDATTGTIKLKARFSNLDDALFPNQFVNARLLVDTQQNAVVIPAAALQMGNEGHFVWVLNDENKVSKHSVTPGIQDSQKVVISAGLSAGDRVVTDGIDRLTEGAKVEVVTASSGEQAQPAPRQSGKHGARS</sequence>
<protein>
    <recommendedName>
        <fullName evidence="1">Multidrug resistance protein MdtA</fullName>
    </recommendedName>
    <alternativeName>
        <fullName evidence="1">Multidrug transporter MdtA</fullName>
    </alternativeName>
</protein>
<evidence type="ECO:0000255" key="1">
    <source>
        <dbReference type="HAMAP-Rule" id="MF_01422"/>
    </source>
</evidence>
<evidence type="ECO:0000256" key="2">
    <source>
        <dbReference type="SAM" id="MobiDB-lite"/>
    </source>
</evidence>
<feature type="signal peptide" evidence="1">
    <location>
        <begin position="1"/>
        <end position="21"/>
    </location>
</feature>
<feature type="chain" id="PRO_0000414046" description="Multidrug resistance protein MdtA">
    <location>
        <begin position="22"/>
        <end position="412"/>
    </location>
</feature>
<feature type="region of interest" description="Disordered" evidence="2">
    <location>
        <begin position="33"/>
        <end position="53"/>
    </location>
</feature>
<feature type="region of interest" description="Disordered" evidence="2">
    <location>
        <begin position="389"/>
        <end position="412"/>
    </location>
</feature>
<gene>
    <name evidence="1" type="primary">mdtA</name>
    <name type="ordered locus">KPN78578_24830</name>
    <name type="ORF">KPN_02526</name>
</gene>
<name>MDTA_KLEP7</name>
<accession>A6TBH3</accession>
<dbReference type="EMBL" id="CP000647">
    <property type="protein sequence ID" value="ABR77944.1"/>
    <property type="molecule type" value="Genomic_DNA"/>
</dbReference>
<dbReference type="RefSeq" id="WP_004175207.1">
    <property type="nucleotide sequence ID" value="NC_009648.1"/>
</dbReference>
<dbReference type="SMR" id="A6TBH3"/>
<dbReference type="STRING" id="272620.KPN_02526"/>
<dbReference type="PaxDb" id="272620-KPN_02526"/>
<dbReference type="EnsemblBacteria" id="ABR77944">
    <property type="protein sequence ID" value="ABR77944"/>
    <property type="gene ID" value="KPN_02526"/>
</dbReference>
<dbReference type="KEGG" id="kpn:KPN_02526"/>
<dbReference type="HOGENOM" id="CLU_018816_2_0_6"/>
<dbReference type="Proteomes" id="UP000000265">
    <property type="component" value="Chromosome"/>
</dbReference>
<dbReference type="GO" id="GO:1990281">
    <property type="term" value="C:efflux pump complex"/>
    <property type="evidence" value="ECO:0007669"/>
    <property type="project" value="TreeGrafter"/>
</dbReference>
<dbReference type="GO" id="GO:0005886">
    <property type="term" value="C:plasma membrane"/>
    <property type="evidence" value="ECO:0007669"/>
    <property type="project" value="UniProtKB-SubCell"/>
</dbReference>
<dbReference type="GO" id="GO:0015562">
    <property type="term" value="F:efflux transmembrane transporter activity"/>
    <property type="evidence" value="ECO:0007669"/>
    <property type="project" value="TreeGrafter"/>
</dbReference>
<dbReference type="FunFam" id="2.40.420.20:FF:000001">
    <property type="entry name" value="Efflux RND transporter periplasmic adaptor subunit"/>
    <property type="match status" value="1"/>
</dbReference>
<dbReference type="FunFam" id="1.10.287.470:FF:000005">
    <property type="entry name" value="Multidrug resistance protein MdtA"/>
    <property type="match status" value="1"/>
</dbReference>
<dbReference type="FunFam" id="2.40.30.170:FF:000006">
    <property type="entry name" value="Multidrug resistance protein MdtA"/>
    <property type="match status" value="1"/>
</dbReference>
<dbReference type="Gene3D" id="2.40.30.170">
    <property type="match status" value="1"/>
</dbReference>
<dbReference type="Gene3D" id="2.40.420.20">
    <property type="match status" value="1"/>
</dbReference>
<dbReference type="Gene3D" id="2.40.50.100">
    <property type="match status" value="1"/>
</dbReference>
<dbReference type="Gene3D" id="1.10.287.470">
    <property type="entry name" value="Helix hairpin bin"/>
    <property type="match status" value="1"/>
</dbReference>
<dbReference type="HAMAP" id="MF_01422">
    <property type="entry name" value="MdtA"/>
    <property type="match status" value="1"/>
</dbReference>
<dbReference type="InterPro" id="IPR039562">
    <property type="entry name" value="MFP_biotin_lipoyl_2"/>
</dbReference>
<dbReference type="InterPro" id="IPR022824">
    <property type="entry name" value="Multidrug-R_MdtA"/>
</dbReference>
<dbReference type="InterPro" id="IPR006143">
    <property type="entry name" value="RND_pump_MFP"/>
</dbReference>
<dbReference type="NCBIfam" id="NF008589">
    <property type="entry name" value="PRK11556.1"/>
    <property type="match status" value="1"/>
</dbReference>
<dbReference type="NCBIfam" id="TIGR01730">
    <property type="entry name" value="RND_mfp"/>
    <property type="match status" value="1"/>
</dbReference>
<dbReference type="PANTHER" id="PTHR30469">
    <property type="entry name" value="MULTIDRUG RESISTANCE PROTEIN MDTA"/>
    <property type="match status" value="1"/>
</dbReference>
<dbReference type="PANTHER" id="PTHR30469:SF12">
    <property type="entry name" value="MULTIDRUG RESISTANCE PROTEIN MDTA"/>
    <property type="match status" value="1"/>
</dbReference>
<dbReference type="Pfam" id="PF13533">
    <property type="entry name" value="Biotin_lipoyl_2"/>
    <property type="match status" value="1"/>
</dbReference>
<dbReference type="Pfam" id="PF13437">
    <property type="entry name" value="HlyD_3"/>
    <property type="match status" value="1"/>
</dbReference>
<dbReference type="SUPFAM" id="SSF111369">
    <property type="entry name" value="HlyD-like secretion proteins"/>
    <property type="match status" value="1"/>
</dbReference>
<comment type="subunit">
    <text evidence="1">Part of a tripartite efflux system composed of MdtA, MdtB and MdtC.</text>
</comment>
<comment type="subcellular location">
    <subcellularLocation>
        <location evidence="1">Cell inner membrane</location>
        <topology evidence="1">Peripheral membrane protein</topology>
    </subcellularLocation>
</comment>
<comment type="similarity">
    <text evidence="1">Belongs to the membrane fusion protein (MFP) (TC 8.A.1) family.</text>
</comment>